<evidence type="ECO:0000255" key="1">
    <source>
        <dbReference type="HAMAP-Rule" id="MF_00354"/>
    </source>
</evidence>
<organism>
    <name type="scientific">Rickettsia typhi (strain ATCC VR-144 / Wilmington)</name>
    <dbReference type="NCBI Taxonomy" id="257363"/>
    <lineage>
        <taxon>Bacteria</taxon>
        <taxon>Pseudomonadati</taxon>
        <taxon>Pseudomonadota</taxon>
        <taxon>Alphaproteobacteria</taxon>
        <taxon>Rickettsiales</taxon>
        <taxon>Rickettsiaceae</taxon>
        <taxon>Rickettsieae</taxon>
        <taxon>Rickettsia</taxon>
        <taxon>typhus group</taxon>
    </lineage>
</organism>
<dbReference type="EC" id="5.3.3.2" evidence="1"/>
<dbReference type="EMBL" id="AE017197">
    <property type="protein sequence ID" value="AAU03916.1"/>
    <property type="molecule type" value="Genomic_DNA"/>
</dbReference>
<dbReference type="RefSeq" id="WP_011190900.1">
    <property type="nucleotide sequence ID" value="NC_006142.1"/>
</dbReference>
<dbReference type="SMR" id="Q68WS6"/>
<dbReference type="KEGG" id="rty:RT0439"/>
<dbReference type="eggNOG" id="COG1304">
    <property type="taxonomic scope" value="Bacteria"/>
</dbReference>
<dbReference type="HOGENOM" id="CLU_065515_1_0_5"/>
<dbReference type="OrthoDB" id="9795032at2"/>
<dbReference type="Proteomes" id="UP000000604">
    <property type="component" value="Chromosome"/>
</dbReference>
<dbReference type="GO" id="GO:0005737">
    <property type="term" value="C:cytoplasm"/>
    <property type="evidence" value="ECO:0007669"/>
    <property type="project" value="UniProtKB-SubCell"/>
</dbReference>
<dbReference type="GO" id="GO:0010181">
    <property type="term" value="F:FMN binding"/>
    <property type="evidence" value="ECO:0007669"/>
    <property type="project" value="UniProtKB-UniRule"/>
</dbReference>
<dbReference type="GO" id="GO:0004452">
    <property type="term" value="F:isopentenyl-diphosphate delta-isomerase activity"/>
    <property type="evidence" value="ECO:0007669"/>
    <property type="project" value="UniProtKB-UniRule"/>
</dbReference>
<dbReference type="GO" id="GO:0000287">
    <property type="term" value="F:magnesium ion binding"/>
    <property type="evidence" value="ECO:0007669"/>
    <property type="project" value="UniProtKB-UniRule"/>
</dbReference>
<dbReference type="GO" id="GO:0070402">
    <property type="term" value="F:NADPH binding"/>
    <property type="evidence" value="ECO:0007669"/>
    <property type="project" value="UniProtKB-UniRule"/>
</dbReference>
<dbReference type="GO" id="GO:0016491">
    <property type="term" value="F:oxidoreductase activity"/>
    <property type="evidence" value="ECO:0007669"/>
    <property type="project" value="InterPro"/>
</dbReference>
<dbReference type="GO" id="GO:0008299">
    <property type="term" value="P:isoprenoid biosynthetic process"/>
    <property type="evidence" value="ECO:0007669"/>
    <property type="project" value="UniProtKB-UniRule"/>
</dbReference>
<dbReference type="CDD" id="cd02811">
    <property type="entry name" value="IDI-2_FMN"/>
    <property type="match status" value="1"/>
</dbReference>
<dbReference type="Gene3D" id="3.20.20.70">
    <property type="entry name" value="Aldolase class I"/>
    <property type="match status" value="1"/>
</dbReference>
<dbReference type="HAMAP" id="MF_00354">
    <property type="entry name" value="Idi_2"/>
    <property type="match status" value="1"/>
</dbReference>
<dbReference type="InterPro" id="IPR013785">
    <property type="entry name" value="Aldolase_TIM"/>
</dbReference>
<dbReference type="InterPro" id="IPR000262">
    <property type="entry name" value="FMN-dep_DH"/>
</dbReference>
<dbReference type="InterPro" id="IPR011179">
    <property type="entry name" value="IPdP_isomerase"/>
</dbReference>
<dbReference type="NCBIfam" id="TIGR02151">
    <property type="entry name" value="IPP_isom_2"/>
    <property type="match status" value="1"/>
</dbReference>
<dbReference type="PANTHER" id="PTHR43665">
    <property type="entry name" value="ISOPENTENYL-DIPHOSPHATE DELTA-ISOMERASE"/>
    <property type="match status" value="1"/>
</dbReference>
<dbReference type="PANTHER" id="PTHR43665:SF1">
    <property type="entry name" value="ISOPENTENYL-DIPHOSPHATE DELTA-ISOMERASE"/>
    <property type="match status" value="1"/>
</dbReference>
<dbReference type="Pfam" id="PF01070">
    <property type="entry name" value="FMN_dh"/>
    <property type="match status" value="2"/>
</dbReference>
<dbReference type="PIRSF" id="PIRSF003314">
    <property type="entry name" value="IPP_isomerase"/>
    <property type="match status" value="1"/>
</dbReference>
<dbReference type="SUPFAM" id="SSF51395">
    <property type="entry name" value="FMN-linked oxidoreductases"/>
    <property type="match status" value="1"/>
</dbReference>
<comment type="function">
    <text evidence="1">Involved in the biosynthesis of isoprenoids. Catalyzes the 1,3-allylic rearrangement of the homoallylic substrate isopentenyl (IPP) to its allylic isomer, dimethylallyl diphosphate (DMAPP).</text>
</comment>
<comment type="catalytic activity">
    <reaction evidence="1">
        <text>isopentenyl diphosphate = dimethylallyl diphosphate</text>
        <dbReference type="Rhea" id="RHEA:23284"/>
        <dbReference type="ChEBI" id="CHEBI:57623"/>
        <dbReference type="ChEBI" id="CHEBI:128769"/>
        <dbReference type="EC" id="5.3.3.2"/>
    </reaction>
</comment>
<comment type="cofactor">
    <cofactor evidence="1">
        <name>FMN</name>
        <dbReference type="ChEBI" id="CHEBI:58210"/>
    </cofactor>
</comment>
<comment type="cofactor">
    <cofactor evidence="1">
        <name>NADPH</name>
        <dbReference type="ChEBI" id="CHEBI:57783"/>
    </cofactor>
</comment>
<comment type="cofactor">
    <cofactor evidence="1">
        <name>Mg(2+)</name>
        <dbReference type="ChEBI" id="CHEBI:18420"/>
    </cofactor>
</comment>
<comment type="subunit">
    <text evidence="1">Homooctamer. Dimer of tetramers.</text>
</comment>
<comment type="subcellular location">
    <subcellularLocation>
        <location evidence="1">Cytoplasm</location>
    </subcellularLocation>
</comment>
<comment type="similarity">
    <text evidence="1">Belongs to the IPP isomerase type 2 family.</text>
</comment>
<name>IDI2_RICTY</name>
<proteinExistence type="inferred from homology"/>
<reference key="1">
    <citation type="journal article" date="2004" name="J. Bacteriol.">
        <title>Complete genome sequence of Rickettsia typhi and comparison with sequences of other Rickettsiae.</title>
        <authorList>
            <person name="McLeod M.P."/>
            <person name="Qin X."/>
            <person name="Karpathy S.E."/>
            <person name="Gioia J."/>
            <person name="Highlander S.K."/>
            <person name="Fox G.E."/>
            <person name="McNeill T.Z."/>
            <person name="Jiang H."/>
            <person name="Muzny D."/>
            <person name="Jacob L.S."/>
            <person name="Hawes A.C."/>
            <person name="Sodergren E."/>
            <person name="Gill R."/>
            <person name="Hume J."/>
            <person name="Morgan M."/>
            <person name="Fan G."/>
            <person name="Amin A.G."/>
            <person name="Gibbs R.A."/>
            <person name="Hong C."/>
            <person name="Yu X.-J."/>
            <person name="Walker D.H."/>
            <person name="Weinstock G.M."/>
        </authorList>
    </citation>
    <scope>NUCLEOTIDE SEQUENCE [LARGE SCALE GENOMIC DNA]</scope>
    <source>
        <strain>ATCC VR-144 / Wilmington</strain>
    </source>
</reference>
<sequence length="342" mass="37359">MLEEQNSDIERKQDHIEINLKQNVNSTLKSGLASIKFIHNALPEINYDNIDTTTTFLGKYMKAPILISSMTGGTTRAKDINYRLAQAAQKSGIAMGLGSMRILLTKPDTIKTFTVRHVAPDIPLLANIGAVQLNYGVTPKECQYLIDTIKADALILHLNVLHELTQPEGNRNWENLLPKIKEVINYLSVPVIIKEVGYGLSKQVAKKLIKVGVKVLDIAGSGGTSWSQVEAYRAKNSMQNRIASSFINWGITTLDSLKMLREVSKDITLIASGGLQSGIDGAKAIRMGANIFGLAGQLLKAADIAESLVSEEIQLIIEQLKITMLCTGSCTLKDLAKAEIML</sequence>
<protein>
    <recommendedName>
        <fullName evidence="1">Isopentenyl-diphosphate delta-isomerase</fullName>
        <shortName evidence="1">IPP isomerase</shortName>
        <ecNumber evidence="1">5.3.3.2</ecNumber>
    </recommendedName>
    <alternativeName>
        <fullName evidence="1">Isopentenyl diphosphate:dimethylallyl diphosphate isomerase</fullName>
    </alternativeName>
    <alternativeName>
        <fullName evidence="1">Isopentenyl pyrophosphate isomerase</fullName>
    </alternativeName>
    <alternativeName>
        <fullName evidence="1">Type 2 isopentenyl diphosphate isomerase</fullName>
        <shortName evidence="1">IDI-2</shortName>
    </alternativeName>
</protein>
<feature type="chain" id="PRO_0000229509" description="Isopentenyl-diphosphate delta-isomerase">
    <location>
        <begin position="1"/>
        <end position="342"/>
    </location>
</feature>
<feature type="binding site" evidence="1">
    <location>
        <begin position="11"/>
        <end position="12"/>
    </location>
    <ligand>
        <name>substrate</name>
    </ligand>
</feature>
<feature type="binding site" evidence="1">
    <location>
        <position position="68"/>
    </location>
    <ligand>
        <name>FMN</name>
        <dbReference type="ChEBI" id="CHEBI:58210"/>
    </ligand>
</feature>
<feature type="binding site" evidence="1">
    <location>
        <begin position="69"/>
        <end position="71"/>
    </location>
    <ligand>
        <name>FMN</name>
        <dbReference type="ChEBI" id="CHEBI:58210"/>
    </ligand>
</feature>
<feature type="binding site" evidence="1">
    <location>
        <begin position="99"/>
        <end position="101"/>
    </location>
    <ligand>
        <name>substrate</name>
    </ligand>
</feature>
<feature type="binding site" evidence="1">
    <location>
        <position position="99"/>
    </location>
    <ligand>
        <name>FMN</name>
        <dbReference type="ChEBI" id="CHEBI:58210"/>
    </ligand>
</feature>
<feature type="binding site" evidence="1">
    <location>
        <position position="127"/>
    </location>
    <ligand>
        <name>FMN</name>
        <dbReference type="ChEBI" id="CHEBI:58210"/>
    </ligand>
</feature>
<feature type="binding site" evidence="1">
    <location>
        <position position="163"/>
    </location>
    <ligand>
        <name>Mg(2+)</name>
        <dbReference type="ChEBI" id="CHEBI:18420"/>
    </ligand>
</feature>
<feature type="binding site" evidence="1">
    <location>
        <position position="194"/>
    </location>
    <ligand>
        <name>FMN</name>
        <dbReference type="ChEBI" id="CHEBI:58210"/>
    </ligand>
</feature>
<feature type="binding site" evidence="1">
    <location>
        <position position="224"/>
    </location>
    <ligand>
        <name>FMN</name>
        <dbReference type="ChEBI" id="CHEBI:58210"/>
    </ligand>
</feature>
<feature type="binding site" evidence="1">
    <location>
        <begin position="295"/>
        <end position="296"/>
    </location>
    <ligand>
        <name>FMN</name>
        <dbReference type="ChEBI" id="CHEBI:58210"/>
    </ligand>
</feature>
<gene>
    <name evidence="1" type="primary">fni</name>
    <name type="ordered locus">RT0439</name>
</gene>
<keyword id="KW-0963">Cytoplasm</keyword>
<keyword id="KW-0285">Flavoprotein</keyword>
<keyword id="KW-0288">FMN</keyword>
<keyword id="KW-0413">Isomerase</keyword>
<keyword id="KW-0414">Isoprene biosynthesis</keyword>
<keyword id="KW-0460">Magnesium</keyword>
<keyword id="KW-0479">Metal-binding</keyword>
<keyword id="KW-0521">NADP</keyword>
<accession>Q68WS6</accession>